<sequence length="174" mass="18890">MTQPIFLVGPRGCGKTTVGLELARACQSQFVDTDHWLQTKAGRTIAEIVEKEGWETFRALETETLKAVSAPSTVIATGGGIILAEHNRGFMREHGIVIYLCAPVATLVERLEAFPEEGQRPTLTGKPISDEVSEVLAERDALYREAAHHVVDASQTPEQVVSHIVTALRLACAS</sequence>
<organism>
    <name type="scientific">Enterobacter sp. (strain 638)</name>
    <dbReference type="NCBI Taxonomy" id="399742"/>
    <lineage>
        <taxon>Bacteria</taxon>
        <taxon>Pseudomonadati</taxon>
        <taxon>Pseudomonadota</taxon>
        <taxon>Gammaproteobacteria</taxon>
        <taxon>Enterobacterales</taxon>
        <taxon>Enterobacteriaceae</taxon>
        <taxon>Enterobacter</taxon>
    </lineage>
</organism>
<proteinExistence type="inferred from homology"/>
<gene>
    <name evidence="1" type="primary">aroL</name>
    <name type="ordered locus">Ent638_0859</name>
</gene>
<keyword id="KW-0028">Amino-acid biosynthesis</keyword>
<keyword id="KW-0057">Aromatic amino acid biosynthesis</keyword>
<keyword id="KW-0067">ATP-binding</keyword>
<keyword id="KW-0963">Cytoplasm</keyword>
<keyword id="KW-0418">Kinase</keyword>
<keyword id="KW-0460">Magnesium</keyword>
<keyword id="KW-0479">Metal-binding</keyword>
<keyword id="KW-0547">Nucleotide-binding</keyword>
<keyword id="KW-0808">Transferase</keyword>
<accession>A4W763</accession>
<reference key="1">
    <citation type="journal article" date="2010" name="PLoS Genet.">
        <title>Genome sequence of the plant growth promoting endophytic bacterium Enterobacter sp. 638.</title>
        <authorList>
            <person name="Taghavi S."/>
            <person name="van der Lelie D."/>
            <person name="Hoffman A."/>
            <person name="Zhang Y.B."/>
            <person name="Walla M.D."/>
            <person name="Vangronsveld J."/>
            <person name="Newman L."/>
            <person name="Monchy S."/>
        </authorList>
    </citation>
    <scope>NUCLEOTIDE SEQUENCE [LARGE SCALE GENOMIC DNA]</scope>
    <source>
        <strain>638</strain>
    </source>
</reference>
<comment type="function">
    <text evidence="1">Catalyzes the specific phosphorylation of the 3-hydroxyl group of shikimic acid using ATP as a cosubstrate.</text>
</comment>
<comment type="catalytic activity">
    <reaction evidence="1">
        <text>shikimate + ATP = 3-phosphoshikimate + ADP + H(+)</text>
        <dbReference type="Rhea" id="RHEA:13121"/>
        <dbReference type="ChEBI" id="CHEBI:15378"/>
        <dbReference type="ChEBI" id="CHEBI:30616"/>
        <dbReference type="ChEBI" id="CHEBI:36208"/>
        <dbReference type="ChEBI" id="CHEBI:145989"/>
        <dbReference type="ChEBI" id="CHEBI:456216"/>
        <dbReference type="EC" id="2.7.1.71"/>
    </reaction>
</comment>
<comment type="cofactor">
    <cofactor evidence="1">
        <name>Mg(2+)</name>
        <dbReference type="ChEBI" id="CHEBI:18420"/>
    </cofactor>
    <text evidence="1">Binds 1 Mg(2+) ion per subunit.</text>
</comment>
<comment type="pathway">
    <text evidence="1">Metabolic intermediate biosynthesis; chorismate biosynthesis; chorismate from D-erythrose 4-phosphate and phosphoenolpyruvate: step 5/7.</text>
</comment>
<comment type="subunit">
    <text evidence="1">Monomer.</text>
</comment>
<comment type="subcellular location">
    <subcellularLocation>
        <location evidence="1">Cytoplasm</location>
    </subcellularLocation>
</comment>
<comment type="domain">
    <text evidence="1">The LID domain closes over the active site upon ATP binding.</text>
</comment>
<comment type="similarity">
    <text evidence="1">Belongs to the shikimate kinase family. AroL subfamily.</text>
</comment>
<dbReference type="EC" id="2.7.1.71" evidence="1"/>
<dbReference type="EMBL" id="CP000653">
    <property type="protein sequence ID" value="ABP59543.1"/>
    <property type="molecule type" value="Genomic_DNA"/>
</dbReference>
<dbReference type="RefSeq" id="WP_012016264.1">
    <property type="nucleotide sequence ID" value="NC_009436.1"/>
</dbReference>
<dbReference type="SMR" id="A4W763"/>
<dbReference type="STRING" id="399742.Ent638_0859"/>
<dbReference type="KEGG" id="ent:Ent638_0859"/>
<dbReference type="eggNOG" id="COG0703">
    <property type="taxonomic scope" value="Bacteria"/>
</dbReference>
<dbReference type="HOGENOM" id="CLU_057607_4_3_6"/>
<dbReference type="OrthoDB" id="9800332at2"/>
<dbReference type="UniPathway" id="UPA00053">
    <property type="reaction ID" value="UER00088"/>
</dbReference>
<dbReference type="Proteomes" id="UP000000230">
    <property type="component" value="Chromosome"/>
</dbReference>
<dbReference type="GO" id="GO:0005829">
    <property type="term" value="C:cytosol"/>
    <property type="evidence" value="ECO:0007669"/>
    <property type="project" value="TreeGrafter"/>
</dbReference>
<dbReference type="GO" id="GO:0005524">
    <property type="term" value="F:ATP binding"/>
    <property type="evidence" value="ECO:0007669"/>
    <property type="project" value="UniProtKB-UniRule"/>
</dbReference>
<dbReference type="GO" id="GO:0000287">
    <property type="term" value="F:magnesium ion binding"/>
    <property type="evidence" value="ECO:0007669"/>
    <property type="project" value="UniProtKB-UniRule"/>
</dbReference>
<dbReference type="GO" id="GO:0004765">
    <property type="term" value="F:shikimate kinase activity"/>
    <property type="evidence" value="ECO:0007669"/>
    <property type="project" value="UniProtKB-UniRule"/>
</dbReference>
<dbReference type="GO" id="GO:0008652">
    <property type="term" value="P:amino acid biosynthetic process"/>
    <property type="evidence" value="ECO:0007669"/>
    <property type="project" value="UniProtKB-KW"/>
</dbReference>
<dbReference type="GO" id="GO:0009073">
    <property type="term" value="P:aromatic amino acid family biosynthetic process"/>
    <property type="evidence" value="ECO:0007669"/>
    <property type="project" value="UniProtKB-KW"/>
</dbReference>
<dbReference type="GO" id="GO:0009423">
    <property type="term" value="P:chorismate biosynthetic process"/>
    <property type="evidence" value="ECO:0007669"/>
    <property type="project" value="UniProtKB-UniRule"/>
</dbReference>
<dbReference type="CDD" id="cd00464">
    <property type="entry name" value="SK"/>
    <property type="match status" value="1"/>
</dbReference>
<dbReference type="Gene3D" id="3.40.50.300">
    <property type="entry name" value="P-loop containing nucleotide triphosphate hydrolases"/>
    <property type="match status" value="1"/>
</dbReference>
<dbReference type="HAMAP" id="MF_00109">
    <property type="entry name" value="Shikimate_kinase"/>
    <property type="match status" value="1"/>
</dbReference>
<dbReference type="HAMAP" id="MF_01269">
    <property type="entry name" value="Shikimate_kinase_2"/>
    <property type="match status" value="1"/>
</dbReference>
<dbReference type="InterPro" id="IPR027417">
    <property type="entry name" value="P-loop_NTPase"/>
</dbReference>
<dbReference type="InterPro" id="IPR031322">
    <property type="entry name" value="Shikimate/glucono_kinase"/>
</dbReference>
<dbReference type="InterPro" id="IPR000623">
    <property type="entry name" value="Shikimate_kinase/TSH1"/>
</dbReference>
<dbReference type="InterPro" id="IPR027544">
    <property type="entry name" value="Shikimate_kinase_2"/>
</dbReference>
<dbReference type="InterPro" id="IPR023000">
    <property type="entry name" value="Shikimate_kinase_CS"/>
</dbReference>
<dbReference type="NCBIfam" id="NF002988">
    <property type="entry name" value="PRK03731.1"/>
    <property type="match status" value="1"/>
</dbReference>
<dbReference type="PANTHER" id="PTHR21087">
    <property type="entry name" value="SHIKIMATE KINASE"/>
    <property type="match status" value="1"/>
</dbReference>
<dbReference type="PANTHER" id="PTHR21087:SF21">
    <property type="entry name" value="SHIKIMATE KINASE 2"/>
    <property type="match status" value="1"/>
</dbReference>
<dbReference type="Pfam" id="PF01202">
    <property type="entry name" value="SKI"/>
    <property type="match status" value="1"/>
</dbReference>
<dbReference type="PRINTS" id="PR01100">
    <property type="entry name" value="SHIKIMTKNASE"/>
</dbReference>
<dbReference type="SUPFAM" id="SSF52540">
    <property type="entry name" value="P-loop containing nucleoside triphosphate hydrolases"/>
    <property type="match status" value="1"/>
</dbReference>
<dbReference type="PROSITE" id="PS01128">
    <property type="entry name" value="SHIKIMATE_KINASE"/>
    <property type="match status" value="1"/>
</dbReference>
<feature type="chain" id="PRO_1000067332" description="Shikimate kinase 2">
    <location>
        <begin position="1"/>
        <end position="174"/>
    </location>
</feature>
<feature type="region of interest" description="LID domain">
    <location>
        <begin position="112"/>
        <end position="126"/>
    </location>
</feature>
<feature type="binding site" evidence="1">
    <location>
        <begin position="12"/>
        <end position="17"/>
    </location>
    <ligand>
        <name>ATP</name>
        <dbReference type="ChEBI" id="CHEBI:30616"/>
    </ligand>
</feature>
<feature type="binding site" evidence="1">
    <location>
        <position position="16"/>
    </location>
    <ligand>
        <name>Mg(2+)</name>
        <dbReference type="ChEBI" id="CHEBI:18420"/>
    </ligand>
</feature>
<feature type="binding site" evidence="1">
    <location>
        <position position="32"/>
    </location>
    <ligand>
        <name>Mg(2+)</name>
        <dbReference type="ChEBI" id="CHEBI:18420"/>
    </ligand>
</feature>
<feature type="binding site" evidence="1">
    <location>
        <position position="34"/>
    </location>
    <ligand>
        <name>substrate</name>
    </ligand>
</feature>
<feature type="binding site" evidence="1">
    <location>
        <position position="58"/>
    </location>
    <ligand>
        <name>substrate</name>
    </ligand>
</feature>
<feature type="binding site" evidence="1">
    <location>
        <position position="79"/>
    </location>
    <ligand>
        <name>substrate</name>
    </ligand>
</feature>
<feature type="binding site" evidence="1">
    <location>
        <position position="120"/>
    </location>
    <ligand>
        <name>ATP</name>
        <dbReference type="ChEBI" id="CHEBI:30616"/>
    </ligand>
</feature>
<feature type="binding site" evidence="1">
    <location>
        <position position="139"/>
    </location>
    <ligand>
        <name>substrate</name>
    </ligand>
</feature>
<feature type="binding site" evidence="1">
    <location>
        <position position="155"/>
    </location>
    <ligand>
        <name>ATP</name>
        <dbReference type="ChEBI" id="CHEBI:30616"/>
    </ligand>
</feature>
<name>AROL_ENT38</name>
<evidence type="ECO:0000255" key="1">
    <source>
        <dbReference type="HAMAP-Rule" id="MF_01269"/>
    </source>
</evidence>
<protein>
    <recommendedName>
        <fullName evidence="1">Shikimate kinase 2</fullName>
        <shortName evidence="1">SK 2</shortName>
        <ecNumber evidence="1">2.7.1.71</ecNumber>
    </recommendedName>
</protein>